<sequence>MPFLDIQKRFGLNIDRWLTIQSGEQPYKMAGRCHAFEKEWIECAHGIGYTRAEKECKIEYDDFVECLLRQKTMRRAGTIRKQRDKLIKEGKYTPPPHHIGKGEPRP</sequence>
<comment type="function">
    <text evidence="6">Accessory subunit of the mitochondrial membrane respiratory chain NADH dehydrogenase (Complex I), that is believed not to be involved in catalysis. Complex I functions in the transfer of electrons from NADH to the respiratory chain. The immediate electron acceptor for the enzyme is believed to be ubiquinone.</text>
</comment>
<comment type="subunit">
    <text evidence="3 6">Mammalian complex I is composed of 45 different subunits. This is a component of the iron-sulfur (IP) fragment of the enzyme.</text>
</comment>
<comment type="interaction">
    <interactant intactId="EBI-1246091">
        <id>O43920</id>
    </interactant>
    <interactant intactId="EBI-2875816">
        <id>Q9NP61</id>
        <label>ARFGAP3</label>
    </interactant>
    <organismsDiffer>false</organismsDiffer>
    <experiments>3</experiments>
</comment>
<comment type="interaction">
    <interactant intactId="EBI-1246091">
        <id>O43920</id>
    </interactant>
    <interactant intactId="EBI-466029">
        <id>P42858</id>
        <label>HTT</label>
    </interactant>
    <organismsDiffer>false</organismsDiffer>
    <experiments>7</experiments>
</comment>
<comment type="interaction">
    <interactant intactId="EBI-1246091">
        <id>O43920</id>
    </interactant>
    <interactant intactId="EBI-10182463">
        <id>Q2NKQ1-4</id>
        <label>SGSM1</label>
    </interactant>
    <organismsDiffer>false</organismsDiffer>
    <experiments>3</experiments>
</comment>
<comment type="interaction">
    <interactant intactId="EBI-1246091">
        <id>O43920</id>
    </interactant>
    <interactant intactId="EBI-3923692">
        <id>Q496A3</id>
        <label>SPATS1</label>
    </interactant>
    <organismsDiffer>false</organismsDiffer>
    <experiments>3</experiments>
</comment>
<comment type="subcellular location">
    <subcellularLocation>
        <location evidence="8">Mitochondrion inner membrane</location>
        <topology evidence="7">Peripheral membrane protein</topology>
    </subcellularLocation>
    <subcellularLocation>
        <location evidence="7">Mitochondrion intermembrane space</location>
    </subcellularLocation>
</comment>
<comment type="domain">
    <text evidence="5">Contains two C-X9-C motifs that are predicted to form a helix-coil-helix structure, permitting the formation of intramolecular disulfide bonds.</text>
</comment>
<comment type="similarity">
    <text evidence="7">Belongs to the complex I NDUFS5 subunit family.</text>
</comment>
<keyword id="KW-0002">3D-structure</keyword>
<keyword id="KW-1015">Disulfide bond</keyword>
<keyword id="KW-0249">Electron transport</keyword>
<keyword id="KW-0472">Membrane</keyword>
<keyword id="KW-0496">Mitochondrion</keyword>
<keyword id="KW-0999">Mitochondrion inner membrane</keyword>
<keyword id="KW-1267">Proteomics identification</keyword>
<keyword id="KW-1185">Reference proteome</keyword>
<keyword id="KW-0679">Respiratory chain</keyword>
<keyword id="KW-0813">Transport</keyword>
<gene>
    <name type="primary">NDUFS5</name>
</gene>
<accession>O43920</accession>
<reference key="1">
    <citation type="journal article" date="1998" name="Proc. Natl. Acad. Sci. U.S.A.">
        <title>Identification of genes expressed in human CD34(+) hematopoietic stem/progenitor cells by expressed sequence tags and efficient full-length cDNA cloning.</title>
        <authorList>
            <person name="Mao M."/>
            <person name="Fu G."/>
            <person name="Wu J.-S."/>
            <person name="Zhang Q.-H."/>
            <person name="Zhou J."/>
            <person name="Kan L.-X."/>
            <person name="Huang Q.-H."/>
            <person name="He K.-L."/>
            <person name="Gu B.-W."/>
            <person name="Han Z.-G."/>
            <person name="Shen Y."/>
            <person name="Gu J."/>
            <person name="Yu Y.-P."/>
            <person name="Xu S.-H."/>
            <person name="Wang Y.-X."/>
            <person name="Chen S.-J."/>
            <person name="Chen Z."/>
        </authorList>
    </citation>
    <scope>NUCLEOTIDE SEQUENCE [LARGE SCALE MRNA]</scope>
    <source>
        <tissue>Umbilical cord blood</tissue>
    </source>
</reference>
<reference key="2">
    <citation type="journal article" date="1999" name="J. Inherit. Metab. Dis.">
        <title>The human NADH:ubiquinone oxidoreductase NDUFS5 (15 kDa) subunit: cDNA cloning, chromosomal localization, tissue distribution and the absence of mutations in isolated complex I-deficient patients.</title>
        <authorList>
            <person name="Loeffen J."/>
            <person name="Smeets R."/>
            <person name="Smeitink J."/>
            <person name="Triepels R."/>
            <person name="Sengers R."/>
            <person name="Trijbels F."/>
            <person name="van den Heuvel L."/>
        </authorList>
    </citation>
    <scope>NUCLEOTIDE SEQUENCE [MRNA]</scope>
</reference>
<reference key="3">
    <citation type="journal article" date="2004" name="Genome Res.">
        <title>The status, quality, and expansion of the NIH full-length cDNA project: the Mammalian Gene Collection (MGC).</title>
        <authorList>
            <consortium name="The MGC Project Team"/>
        </authorList>
    </citation>
    <scope>NUCLEOTIDE SEQUENCE [LARGE SCALE MRNA]</scope>
    <source>
        <tissue>Kidney</tissue>
    </source>
</reference>
<reference key="4">
    <citation type="journal article" date="2003" name="J. Biol. Chem.">
        <title>The subunit composition of the human NADH dehydrogenase obtained by rapid one-step immunopurification.</title>
        <authorList>
            <person name="Murray J."/>
            <person name="Zhang B."/>
            <person name="Taylor S.W."/>
            <person name="Oglesbee D."/>
            <person name="Fahy E."/>
            <person name="Marusich M.F."/>
            <person name="Ghosh S.S."/>
            <person name="Capaldi R.A."/>
        </authorList>
    </citation>
    <scope>IDENTIFICATION IN THE NADH-UBIQUINONE OXIDOREDUCTASE COMPLEX</scope>
    <scope>IDENTIFICATION BY MASS SPECTROMETRY</scope>
    <scope>SUBCELLULAR LOCATION</scope>
</reference>
<reference key="5">
    <citation type="journal article" date="2011" name="BMC Syst. Biol.">
        <title>Initial characterization of the human central proteome.</title>
        <authorList>
            <person name="Burkard T.R."/>
            <person name="Planyavsky M."/>
            <person name="Kaupe I."/>
            <person name="Breitwieser F.P."/>
            <person name="Buerckstuemmer T."/>
            <person name="Bennett K.L."/>
            <person name="Superti-Furga G."/>
            <person name="Colinge J."/>
        </authorList>
    </citation>
    <scope>IDENTIFICATION BY MASS SPECTROMETRY [LARGE SCALE ANALYSIS]</scope>
</reference>
<reference key="6">
    <citation type="journal article" date="2011" name="FEBS Lett.">
        <title>NDUFB7 and NDUFA8 are located at the intermembrane surface of complex I.</title>
        <authorList>
            <person name="Szklarczyk R."/>
            <person name="Wanschers B.F."/>
            <person name="Nabuurs S.B."/>
            <person name="Nouws J."/>
            <person name="Nijtmans L.G."/>
            <person name="Huynen M.A."/>
        </authorList>
    </citation>
    <scope>DOMAIN</scope>
    <scope>MOTIF</scope>
</reference>
<reference key="7">
    <citation type="journal article" date="2012" name="Proc. Natl. Acad. Sci. U.S.A.">
        <title>N-terminal acetylome analyses and functional insights of the N-terminal acetyltransferase NatB.</title>
        <authorList>
            <person name="Van Damme P."/>
            <person name="Lasa M."/>
            <person name="Polevoda B."/>
            <person name="Gazquez C."/>
            <person name="Elosegui-Artola A."/>
            <person name="Kim D.S."/>
            <person name="De Juan-Pardo E."/>
            <person name="Demeyer K."/>
            <person name="Hole K."/>
            <person name="Larrea E."/>
            <person name="Timmerman E."/>
            <person name="Prieto J."/>
            <person name="Arnesen T."/>
            <person name="Sherman F."/>
            <person name="Gevaert K."/>
            <person name="Aldabe R."/>
        </authorList>
    </citation>
    <scope>IDENTIFICATION BY MASS SPECTROMETRY [LARGE SCALE ANALYSIS]</scope>
</reference>
<reference key="8">
    <citation type="journal article" date="2014" name="J. Proteomics">
        <title>An enzyme assisted RP-RPLC approach for in-depth analysis of human liver phosphoproteome.</title>
        <authorList>
            <person name="Bian Y."/>
            <person name="Song C."/>
            <person name="Cheng K."/>
            <person name="Dong M."/>
            <person name="Wang F."/>
            <person name="Huang J."/>
            <person name="Sun D."/>
            <person name="Wang L."/>
            <person name="Ye M."/>
            <person name="Zou H."/>
        </authorList>
    </citation>
    <scope>IDENTIFICATION BY MASS SPECTROMETRY [LARGE SCALE ANALYSIS]</scope>
    <source>
        <tissue>Liver</tissue>
    </source>
</reference>
<reference key="9">
    <citation type="journal article" date="2015" name="Proteomics">
        <title>N-terminome analysis of the human mitochondrial proteome.</title>
        <authorList>
            <person name="Vaca Jacome A.S."/>
            <person name="Rabilloud T."/>
            <person name="Schaeffer-Reiss C."/>
            <person name="Rompais M."/>
            <person name="Ayoub D."/>
            <person name="Lane L."/>
            <person name="Bairoch A."/>
            <person name="Van Dorsselaer A."/>
            <person name="Carapito C."/>
        </authorList>
    </citation>
    <scope>IDENTIFICATION BY MASS SPECTROMETRY [LARGE SCALE ANALYSIS]</scope>
</reference>
<reference key="10">
    <citation type="journal article" date="2016" name="Nature">
        <title>Accessory subunits are integral for assembly and function of human mitochondrial complex I.</title>
        <authorList>
            <person name="Stroud D.A."/>
            <person name="Surgenor E.E."/>
            <person name="Formosa L.E."/>
            <person name="Reljic B."/>
            <person name="Frazier A.E."/>
            <person name="Dibley M.G."/>
            <person name="Osellame L.D."/>
            <person name="Stait T."/>
            <person name="Beilharz T.H."/>
            <person name="Thorburn D.R."/>
            <person name="Salim A."/>
            <person name="Ryan M.T."/>
        </authorList>
    </citation>
    <scope>FUNCTION</scope>
    <scope>IDENTIFICATION IN THE NADH-UBIQUINONE OXIDOREDUCTASE COMPLEX</scope>
</reference>
<reference key="11">
    <citation type="journal article" date="2010" name="Nat. Genet.">
        <title>High-throughput, pooled sequencing identifies mutations in NUBPL and FOXRED1 in human complex I deficiency.</title>
        <authorList>
            <person name="Calvo S.E."/>
            <person name="Tucker E.J."/>
            <person name="Compton A.G."/>
            <person name="Kirby D.M."/>
            <person name="Crawford G."/>
            <person name="Burtt N.P."/>
            <person name="Rivas M."/>
            <person name="Guiducci C."/>
            <person name="Bruno D.L."/>
            <person name="Goldberger O.A."/>
            <person name="Redman M.C."/>
            <person name="Wiltshire E."/>
            <person name="Wilson C.J."/>
            <person name="Altshuler D."/>
            <person name="Gabriel S.B."/>
            <person name="Daly M.J."/>
            <person name="Thorburn D.R."/>
            <person name="Mootha V.K."/>
        </authorList>
    </citation>
    <scope>VARIANT SER-96</scope>
</reference>
<organism>
    <name type="scientific">Homo sapiens</name>
    <name type="common">Human</name>
    <dbReference type="NCBI Taxonomy" id="9606"/>
    <lineage>
        <taxon>Eukaryota</taxon>
        <taxon>Metazoa</taxon>
        <taxon>Chordata</taxon>
        <taxon>Craniata</taxon>
        <taxon>Vertebrata</taxon>
        <taxon>Euteleostomi</taxon>
        <taxon>Mammalia</taxon>
        <taxon>Eutheria</taxon>
        <taxon>Euarchontoglires</taxon>
        <taxon>Primates</taxon>
        <taxon>Haplorrhini</taxon>
        <taxon>Catarrhini</taxon>
        <taxon>Hominidae</taxon>
        <taxon>Homo</taxon>
    </lineage>
</organism>
<dbReference type="EMBL" id="AF047434">
    <property type="protein sequence ID" value="AAC39878.1"/>
    <property type="molecule type" value="mRNA"/>
</dbReference>
<dbReference type="EMBL" id="AF020352">
    <property type="protein sequence ID" value="AAB87866.1"/>
    <property type="molecule type" value="mRNA"/>
</dbReference>
<dbReference type="EMBL" id="BC001884">
    <property type="protein sequence ID" value="AAH01884.1"/>
    <property type="molecule type" value="mRNA"/>
</dbReference>
<dbReference type="CCDS" id="CCDS434.1"/>
<dbReference type="RefSeq" id="NP_001171908.1">
    <property type="nucleotide sequence ID" value="NM_001184979.2"/>
</dbReference>
<dbReference type="RefSeq" id="NP_004543.1">
    <property type="nucleotide sequence ID" value="NM_004552.3"/>
</dbReference>
<dbReference type="PDB" id="5XTC">
    <property type="method" value="EM"/>
    <property type="resolution" value="3.70 A"/>
    <property type="chains" value="h=2-105"/>
</dbReference>
<dbReference type="PDB" id="5XTD">
    <property type="method" value="EM"/>
    <property type="resolution" value="3.70 A"/>
    <property type="chains" value="h=2-105"/>
</dbReference>
<dbReference type="PDB" id="5XTH">
    <property type="method" value="EM"/>
    <property type="resolution" value="3.90 A"/>
    <property type="chains" value="h=2-105"/>
</dbReference>
<dbReference type="PDB" id="5XTI">
    <property type="method" value="EM"/>
    <property type="resolution" value="17.40 A"/>
    <property type="chains" value="Bh/h=2-105"/>
</dbReference>
<dbReference type="PDBsum" id="5XTC"/>
<dbReference type="PDBsum" id="5XTD"/>
<dbReference type="PDBsum" id="5XTH"/>
<dbReference type="PDBsum" id="5XTI"/>
<dbReference type="SMR" id="O43920"/>
<dbReference type="BioGRID" id="110804">
    <property type="interactions" value="162"/>
</dbReference>
<dbReference type="ComplexPortal" id="CPX-577">
    <property type="entry name" value="Mitochondrial respiratory chain complex I"/>
</dbReference>
<dbReference type="CORUM" id="O43920"/>
<dbReference type="FunCoup" id="O43920">
    <property type="interactions" value="879"/>
</dbReference>
<dbReference type="IntAct" id="O43920">
    <property type="interactions" value="105"/>
</dbReference>
<dbReference type="MINT" id="O43920"/>
<dbReference type="STRING" id="9606.ENSP00000362058"/>
<dbReference type="BindingDB" id="O43920"/>
<dbReference type="ChEMBL" id="CHEMBL2363065"/>
<dbReference type="DrugBank" id="DB00157">
    <property type="generic name" value="NADH"/>
</dbReference>
<dbReference type="DrugCentral" id="O43920"/>
<dbReference type="iPTMnet" id="O43920"/>
<dbReference type="PhosphoSitePlus" id="O43920"/>
<dbReference type="SwissPalm" id="O43920"/>
<dbReference type="BioMuta" id="NDUFS5"/>
<dbReference type="jPOST" id="O43920"/>
<dbReference type="MassIVE" id="O43920"/>
<dbReference type="PaxDb" id="9606-ENSP00000362060"/>
<dbReference type="PeptideAtlas" id="O43920"/>
<dbReference type="ProteomicsDB" id="49237"/>
<dbReference type="Pumba" id="O43920"/>
<dbReference type="TopDownProteomics" id="O43920"/>
<dbReference type="Antibodypedia" id="31851">
    <property type="antibodies" value="220 antibodies from 31 providers"/>
</dbReference>
<dbReference type="DNASU" id="4725"/>
<dbReference type="Ensembl" id="ENST00000372967.3">
    <property type="protein sequence ID" value="ENSP00000362058.3"/>
    <property type="gene ID" value="ENSG00000168653.11"/>
</dbReference>
<dbReference type="Ensembl" id="ENST00000372969.8">
    <property type="protein sequence ID" value="ENSP00000362060.3"/>
    <property type="gene ID" value="ENSG00000168653.11"/>
</dbReference>
<dbReference type="GeneID" id="4725"/>
<dbReference type="KEGG" id="hsa:4725"/>
<dbReference type="MANE-Select" id="ENST00000372969.8">
    <property type="protein sequence ID" value="ENSP00000362060.3"/>
    <property type="RefSeq nucleotide sequence ID" value="NM_004552.3"/>
    <property type="RefSeq protein sequence ID" value="NP_004543.1"/>
</dbReference>
<dbReference type="AGR" id="HGNC:7712"/>
<dbReference type="CTD" id="4725"/>
<dbReference type="DisGeNET" id="4725"/>
<dbReference type="GeneCards" id="NDUFS5"/>
<dbReference type="HGNC" id="HGNC:7712">
    <property type="gene designation" value="NDUFS5"/>
</dbReference>
<dbReference type="HPA" id="ENSG00000168653">
    <property type="expression patterns" value="Low tissue specificity"/>
</dbReference>
<dbReference type="MalaCards" id="NDUFS5"/>
<dbReference type="MIM" id="603847">
    <property type="type" value="gene"/>
</dbReference>
<dbReference type="neXtProt" id="NX_O43920"/>
<dbReference type="OpenTargets" id="ENSG00000168653"/>
<dbReference type="PharmGKB" id="PA31522"/>
<dbReference type="VEuPathDB" id="HostDB:ENSG00000168653"/>
<dbReference type="eggNOG" id="KOG4110">
    <property type="taxonomic scope" value="Eukaryota"/>
</dbReference>
<dbReference type="GeneTree" id="ENSGT00390000002919"/>
<dbReference type="HOGENOM" id="CLU_176387_0_0_1"/>
<dbReference type="InParanoid" id="O43920"/>
<dbReference type="OMA" id="RQQRDKM"/>
<dbReference type="OrthoDB" id="9992197at2759"/>
<dbReference type="PAN-GO" id="O43920">
    <property type="GO annotations" value="2 GO annotations based on evolutionary models"/>
</dbReference>
<dbReference type="PhylomeDB" id="O43920"/>
<dbReference type="TreeFam" id="TF332111"/>
<dbReference type="BioCyc" id="MetaCyc:ENSG00000168653-MONOMER"/>
<dbReference type="PathwayCommons" id="O43920"/>
<dbReference type="Reactome" id="R-HSA-611105">
    <property type="pathway name" value="Respiratory electron transport"/>
</dbReference>
<dbReference type="Reactome" id="R-HSA-6799198">
    <property type="pathway name" value="Complex I biogenesis"/>
</dbReference>
<dbReference type="SignaLink" id="O43920"/>
<dbReference type="SIGNOR" id="O43920"/>
<dbReference type="BioGRID-ORCS" id="4725">
    <property type="hits" value="524 hits in 1137 CRISPR screens"/>
</dbReference>
<dbReference type="ChiTaRS" id="NDUFS5">
    <property type="organism name" value="human"/>
</dbReference>
<dbReference type="GeneWiki" id="NDUFS5"/>
<dbReference type="GenomeRNAi" id="4725"/>
<dbReference type="Pharos" id="O43920">
    <property type="development level" value="Tclin"/>
</dbReference>
<dbReference type="PRO" id="PR:O43920"/>
<dbReference type="Proteomes" id="UP000005640">
    <property type="component" value="Chromosome 1"/>
</dbReference>
<dbReference type="RNAct" id="O43920">
    <property type="molecule type" value="protein"/>
</dbReference>
<dbReference type="Bgee" id="ENSG00000168653">
    <property type="expression patterns" value="Expressed in apex of heart and 208 other cell types or tissues"/>
</dbReference>
<dbReference type="ExpressionAtlas" id="O43920">
    <property type="expression patterns" value="baseline and differential"/>
</dbReference>
<dbReference type="GO" id="GO:0005743">
    <property type="term" value="C:mitochondrial inner membrane"/>
    <property type="evidence" value="ECO:0000314"/>
    <property type="project" value="ComplexPortal"/>
</dbReference>
<dbReference type="GO" id="GO:0005758">
    <property type="term" value="C:mitochondrial intermembrane space"/>
    <property type="evidence" value="ECO:0007669"/>
    <property type="project" value="UniProtKB-SubCell"/>
</dbReference>
<dbReference type="GO" id="GO:0005739">
    <property type="term" value="C:mitochondrion"/>
    <property type="evidence" value="ECO:0000314"/>
    <property type="project" value="UniProtKB"/>
</dbReference>
<dbReference type="GO" id="GO:0045271">
    <property type="term" value="C:respiratory chain complex I"/>
    <property type="evidence" value="ECO:0000314"/>
    <property type="project" value="UniProtKB"/>
</dbReference>
<dbReference type="GO" id="GO:0008137">
    <property type="term" value="F:NADH dehydrogenase (ubiquinone) activity"/>
    <property type="evidence" value="ECO:0000303"/>
    <property type="project" value="UniProtKB"/>
</dbReference>
<dbReference type="GO" id="GO:0009060">
    <property type="term" value="P:aerobic respiration"/>
    <property type="evidence" value="ECO:0000303"/>
    <property type="project" value="ComplexPortal"/>
</dbReference>
<dbReference type="GO" id="GO:0006120">
    <property type="term" value="P:mitochondrial electron transport, NADH to ubiquinone"/>
    <property type="evidence" value="ECO:0000303"/>
    <property type="project" value="UniProtKB"/>
</dbReference>
<dbReference type="GO" id="GO:0032981">
    <property type="term" value="P:mitochondrial respiratory chain complex I assembly"/>
    <property type="evidence" value="ECO:0000315"/>
    <property type="project" value="UniProtKB"/>
</dbReference>
<dbReference type="GO" id="GO:0042776">
    <property type="term" value="P:proton motive force-driven mitochondrial ATP synthesis"/>
    <property type="evidence" value="ECO:0000303"/>
    <property type="project" value="ComplexPortal"/>
</dbReference>
<dbReference type="CDD" id="cd24141">
    <property type="entry name" value="NDUFS5-like"/>
    <property type="match status" value="1"/>
</dbReference>
<dbReference type="InterPro" id="IPR019342">
    <property type="entry name" value="NADH_UbQ_OxRdtase_FeS-su5"/>
</dbReference>
<dbReference type="PANTHER" id="PTHR15224">
    <property type="entry name" value="NADH DEHYDROGENASE [UBIQUINONE] IRON-SULFUR PROTEIN 5"/>
    <property type="match status" value="1"/>
</dbReference>
<dbReference type="PANTHER" id="PTHR15224:SF1">
    <property type="entry name" value="NADH DEHYDROGENASE [UBIQUINONE] IRON-SULFUR PROTEIN 5"/>
    <property type="match status" value="1"/>
</dbReference>
<dbReference type="Pfam" id="PF10200">
    <property type="entry name" value="Ndufs5"/>
    <property type="match status" value="1"/>
</dbReference>
<dbReference type="PROSITE" id="PS51808">
    <property type="entry name" value="CHCH"/>
    <property type="match status" value="1"/>
</dbReference>
<name>NDUS5_HUMAN</name>
<proteinExistence type="evidence at protein level"/>
<feature type="chain" id="PRO_0000118786" description="NADH dehydrogenase [ubiquinone] iron-sulfur protein 5">
    <location>
        <begin position="1"/>
        <end position="106"/>
    </location>
</feature>
<feature type="domain" description="CHCH" evidence="1">
    <location>
        <begin position="30"/>
        <end position="74"/>
    </location>
</feature>
<feature type="region of interest" description="Disordered" evidence="2">
    <location>
        <begin position="84"/>
        <end position="106"/>
    </location>
</feature>
<feature type="short sequence motif" description="Cx9C motif 1" evidence="1">
    <location>
        <begin position="33"/>
        <end position="43"/>
    </location>
</feature>
<feature type="short sequence motif" description="Cx9C motif 2" evidence="1">
    <location>
        <begin position="56"/>
        <end position="66"/>
    </location>
</feature>
<feature type="disulfide bond" evidence="1">
    <location>
        <begin position="33"/>
        <end position="66"/>
    </location>
</feature>
<feature type="disulfide bond" evidence="1">
    <location>
        <begin position="43"/>
        <end position="56"/>
    </location>
</feature>
<feature type="sequence variant" id="VAR_064569" description="Found in a patient with mitochondrial complex I deficiency; uncertain significance; dbSNP:rs201212110." evidence="4">
    <original>P</original>
    <variation>S</variation>
    <location>
        <position position="96"/>
    </location>
</feature>
<evidence type="ECO:0000255" key="1">
    <source>
        <dbReference type="PROSITE-ProRule" id="PRU01150"/>
    </source>
</evidence>
<evidence type="ECO:0000256" key="2">
    <source>
        <dbReference type="SAM" id="MobiDB-lite"/>
    </source>
</evidence>
<evidence type="ECO:0000269" key="3">
    <source>
    </source>
</evidence>
<evidence type="ECO:0000269" key="4">
    <source>
    </source>
</evidence>
<evidence type="ECO:0000269" key="5">
    <source>
    </source>
</evidence>
<evidence type="ECO:0000269" key="6">
    <source>
    </source>
</evidence>
<evidence type="ECO:0000305" key="7"/>
<evidence type="ECO:0000305" key="8">
    <source>
    </source>
</evidence>
<protein>
    <recommendedName>
        <fullName>NADH dehydrogenase [ubiquinone] iron-sulfur protein 5</fullName>
    </recommendedName>
    <alternativeName>
        <fullName>Complex I-15 kDa</fullName>
        <shortName>CI-15 kDa</shortName>
    </alternativeName>
    <alternativeName>
        <fullName>NADH-ubiquinone oxidoreductase 15 kDa subunit</fullName>
    </alternativeName>
</protein>